<proteinExistence type="inferred from homology"/>
<keyword id="KW-0249">Electron transport</keyword>
<keyword id="KW-0349">Heme</keyword>
<keyword id="KW-0408">Iron</keyword>
<keyword id="KW-0472">Membrane</keyword>
<keyword id="KW-0479">Metal-binding</keyword>
<keyword id="KW-0602">Photosynthesis</keyword>
<keyword id="KW-0604">Photosystem II</keyword>
<keyword id="KW-1185">Reference proteome</keyword>
<keyword id="KW-0732">Signal</keyword>
<keyword id="KW-0793">Thylakoid</keyword>
<keyword id="KW-0813">Transport</keyword>
<sequence>MVSVFSSLRQSFKGLLVLVPVLIGLAFISPAEAVQWDAETLTVPVNPDGAEVTFTDREINAGRKVFNTSCGTCHAGGITKTNQNVGLDPETLALATPARDNVDALVDYMKDPTSYDGEYSISDVHPSMRSAELYPAMRDLDDEDLRLMAGYILVSPKVQGSSWGGGKIYF</sequence>
<gene>
    <name evidence="1" type="primary">psbV</name>
    <name type="ordered locus">Syncc9902_0531</name>
</gene>
<protein>
    <recommendedName>
        <fullName evidence="1">Photosystem II extrinsic protein V</fullName>
        <shortName evidence="1">PsbV</shortName>
    </recommendedName>
    <alternativeName>
        <fullName evidence="1">Cytochrome c-550</fullName>
    </alternativeName>
    <alternativeName>
        <fullName evidence="1">Cytochrome c550</fullName>
    </alternativeName>
    <alternativeName>
        <fullName evidence="1">Low-potential cytochrome c</fullName>
    </alternativeName>
</protein>
<feature type="signal peptide" evidence="1">
    <location>
        <begin position="1"/>
        <end position="33"/>
    </location>
</feature>
<feature type="chain" id="PRO_0000295603" description="Photosystem II extrinsic protein V">
    <location>
        <begin position="34"/>
        <end position="170"/>
    </location>
</feature>
<feature type="binding site" description="covalent" evidence="1">
    <location>
        <position position="70"/>
    </location>
    <ligand>
        <name>heme c</name>
        <dbReference type="ChEBI" id="CHEBI:61717"/>
    </ligand>
</feature>
<feature type="binding site" description="covalent" evidence="1">
    <location>
        <position position="73"/>
    </location>
    <ligand>
        <name>heme c</name>
        <dbReference type="ChEBI" id="CHEBI:61717"/>
    </ligand>
</feature>
<feature type="binding site" description="axial binding residue" evidence="1">
    <location>
        <position position="74"/>
    </location>
    <ligand>
        <name>heme c</name>
        <dbReference type="ChEBI" id="CHEBI:61717"/>
    </ligand>
    <ligandPart>
        <name>Fe</name>
        <dbReference type="ChEBI" id="CHEBI:18248"/>
    </ligandPart>
</feature>
<feature type="binding site" description="axial binding residue" evidence="1">
    <location>
        <position position="137"/>
    </location>
    <ligand>
        <name>heme c</name>
        <dbReference type="ChEBI" id="CHEBI:61717"/>
    </ligand>
    <ligandPart>
        <name>Fe</name>
        <dbReference type="ChEBI" id="CHEBI:18248"/>
    </ligandPart>
</feature>
<comment type="function">
    <text evidence="1">One of the extrinsic, lumenal subunits of photosystem II (PSII). PSII is a light-driven water plastoquinone oxidoreductase, using light energy to abstract electrons from H(2)O, generating a proton gradient subsequently used for ATP formation. The extrinsic proteins stabilize the structure of photosystem II oxygen-evolving complex (OEC), the ion environment of oxygen evolution and protect the OEC against heat-induced inactivation. Low-potential cytochrome c that plays a role in the OEC of PSII.</text>
</comment>
<comment type="cofactor">
    <cofactor evidence="1">
        <name>heme c</name>
        <dbReference type="ChEBI" id="CHEBI:61717"/>
    </cofactor>
    <text evidence="1">Binds 1 heme c group covalently per subunit.</text>
</comment>
<comment type="subunit">
    <text evidence="1">PSII is composed of 1 copy each of membrane proteins PsbA, PsbB, PsbC, PsbD, PsbE, PsbF, PsbH, PsbI, PsbJ, PsbK, PsbL, PsbM, PsbT, PsbX, PsbY, PsbZ, Psb30/Ycf12, peripheral proteins PsbO, CyanoQ (PsbQ), PsbU, PsbV and a large number of cofactors. It forms dimeric complexes.</text>
</comment>
<comment type="subcellular location">
    <subcellularLocation>
        <location evidence="1">Cellular thylakoid membrane</location>
        <topology evidence="1">Peripheral membrane protein</topology>
        <orientation evidence="1">Lumenal side</orientation>
    </subcellularLocation>
    <text evidence="1">Associated with photosystem II at the lumenal side of the thylakoid membrane.</text>
</comment>
<comment type="similarity">
    <text evidence="1">Belongs to the cytochrome c family. PsbV subfamily.</text>
</comment>
<reference key="1">
    <citation type="submission" date="2005-08" db="EMBL/GenBank/DDBJ databases">
        <title>Complete sequence of Synechococcus sp. CC9902.</title>
        <authorList>
            <person name="Copeland A."/>
            <person name="Lucas S."/>
            <person name="Lapidus A."/>
            <person name="Barry K."/>
            <person name="Detter J.C."/>
            <person name="Glavina T."/>
            <person name="Hammon N."/>
            <person name="Israni S."/>
            <person name="Pitluck S."/>
            <person name="Martinez M."/>
            <person name="Schmutz J."/>
            <person name="Larimer F."/>
            <person name="Land M."/>
            <person name="Kyrpides N."/>
            <person name="Ivanova N."/>
            <person name="Richardson P."/>
        </authorList>
    </citation>
    <scope>NUCLEOTIDE SEQUENCE [LARGE SCALE GENOMIC DNA]</scope>
    <source>
        <strain>CC9902</strain>
    </source>
</reference>
<organism>
    <name type="scientific">Synechococcus sp. (strain CC9902)</name>
    <dbReference type="NCBI Taxonomy" id="316279"/>
    <lineage>
        <taxon>Bacteria</taxon>
        <taxon>Bacillati</taxon>
        <taxon>Cyanobacteriota</taxon>
        <taxon>Cyanophyceae</taxon>
        <taxon>Synechococcales</taxon>
        <taxon>Synechococcaceae</taxon>
        <taxon>Synechococcus</taxon>
    </lineage>
</organism>
<evidence type="ECO:0000255" key="1">
    <source>
        <dbReference type="HAMAP-Rule" id="MF_01378"/>
    </source>
</evidence>
<dbReference type="EMBL" id="CP000097">
    <property type="protein sequence ID" value="ABB25499.1"/>
    <property type="molecule type" value="Genomic_DNA"/>
</dbReference>
<dbReference type="RefSeq" id="WP_011359346.1">
    <property type="nucleotide sequence ID" value="NC_007513.1"/>
</dbReference>
<dbReference type="SMR" id="Q3AZH8"/>
<dbReference type="STRING" id="316279.Syncc9902_0531"/>
<dbReference type="KEGG" id="sye:Syncc9902_0531"/>
<dbReference type="eggNOG" id="COG2010">
    <property type="taxonomic scope" value="Bacteria"/>
</dbReference>
<dbReference type="HOGENOM" id="CLU_104149_1_0_3"/>
<dbReference type="OrthoDB" id="486949at2"/>
<dbReference type="Proteomes" id="UP000002712">
    <property type="component" value="Chromosome"/>
</dbReference>
<dbReference type="GO" id="GO:0009523">
    <property type="term" value="C:photosystem II"/>
    <property type="evidence" value="ECO:0007669"/>
    <property type="project" value="UniProtKB-KW"/>
</dbReference>
<dbReference type="GO" id="GO:0031676">
    <property type="term" value="C:plasma membrane-derived thylakoid membrane"/>
    <property type="evidence" value="ECO:0007669"/>
    <property type="project" value="UniProtKB-SubCell"/>
</dbReference>
<dbReference type="GO" id="GO:0009055">
    <property type="term" value="F:electron transfer activity"/>
    <property type="evidence" value="ECO:0007669"/>
    <property type="project" value="InterPro"/>
</dbReference>
<dbReference type="GO" id="GO:0020037">
    <property type="term" value="F:heme binding"/>
    <property type="evidence" value="ECO:0007669"/>
    <property type="project" value="InterPro"/>
</dbReference>
<dbReference type="GO" id="GO:0005506">
    <property type="term" value="F:iron ion binding"/>
    <property type="evidence" value="ECO:0007669"/>
    <property type="project" value="InterPro"/>
</dbReference>
<dbReference type="GO" id="GO:0019684">
    <property type="term" value="P:photosynthesis, light reaction"/>
    <property type="evidence" value="ECO:0007669"/>
    <property type="project" value="UniProtKB-UniRule"/>
</dbReference>
<dbReference type="GO" id="GO:0022904">
    <property type="term" value="P:respiratory electron transport chain"/>
    <property type="evidence" value="ECO:0007669"/>
    <property type="project" value="InterPro"/>
</dbReference>
<dbReference type="Gene3D" id="1.10.760.10">
    <property type="entry name" value="Cytochrome c-like domain"/>
    <property type="match status" value="1"/>
</dbReference>
<dbReference type="HAMAP" id="MF_01378">
    <property type="entry name" value="PSII_Cyt550"/>
    <property type="match status" value="1"/>
</dbReference>
<dbReference type="InterPro" id="IPR009056">
    <property type="entry name" value="Cyt_c-like_dom"/>
</dbReference>
<dbReference type="InterPro" id="IPR036909">
    <property type="entry name" value="Cyt_c-like_dom_sf"/>
</dbReference>
<dbReference type="InterPro" id="IPR029490">
    <property type="entry name" value="Cytochrom_C550"/>
</dbReference>
<dbReference type="InterPro" id="IPR017851">
    <property type="entry name" value="PsbV_cyt_c550"/>
</dbReference>
<dbReference type="InterPro" id="IPR016003">
    <property type="entry name" value="PsbV_cyt_c550-like"/>
</dbReference>
<dbReference type="NCBIfam" id="TIGR03045">
    <property type="entry name" value="PS_II_C550"/>
    <property type="match status" value="1"/>
</dbReference>
<dbReference type="Pfam" id="PF14495">
    <property type="entry name" value="Cytochrom_C550"/>
    <property type="match status" value="1"/>
</dbReference>
<dbReference type="PIRSF" id="PIRSF005890">
    <property type="entry name" value="Phot_II_cyt_c550"/>
    <property type="match status" value="1"/>
</dbReference>
<dbReference type="SUPFAM" id="SSF46626">
    <property type="entry name" value="Cytochrome c"/>
    <property type="match status" value="1"/>
</dbReference>
<dbReference type="PROSITE" id="PS51007">
    <property type="entry name" value="CYTC"/>
    <property type="match status" value="1"/>
</dbReference>
<accession>Q3AZH8</accession>
<name>CY550_SYNS9</name>